<name>ATPG_PSEU2</name>
<comment type="function">
    <text evidence="1">Produces ATP from ADP in the presence of a proton gradient across the membrane. The gamma chain is believed to be important in regulating ATPase activity and the flow of protons through the CF(0) complex.</text>
</comment>
<comment type="subunit">
    <text evidence="1">F-type ATPases have 2 components, CF(1) - the catalytic core - and CF(0) - the membrane proton channel. CF(1) has five subunits: alpha(3), beta(3), gamma(1), delta(1), epsilon(1). CF(0) has three main subunits: a, b and c.</text>
</comment>
<comment type="subcellular location">
    <subcellularLocation>
        <location evidence="1">Cell inner membrane</location>
        <topology evidence="1">Peripheral membrane protein</topology>
    </subcellularLocation>
</comment>
<comment type="similarity">
    <text evidence="1">Belongs to the ATPase gamma chain family.</text>
</comment>
<organism>
    <name type="scientific">Pseudomonas syringae pv. syringae (strain B728a)</name>
    <dbReference type="NCBI Taxonomy" id="205918"/>
    <lineage>
        <taxon>Bacteria</taxon>
        <taxon>Pseudomonadati</taxon>
        <taxon>Pseudomonadota</taxon>
        <taxon>Gammaproteobacteria</taxon>
        <taxon>Pseudomonadales</taxon>
        <taxon>Pseudomonadaceae</taxon>
        <taxon>Pseudomonas</taxon>
        <taxon>Pseudomonas syringae</taxon>
    </lineage>
</organism>
<proteinExistence type="inferred from homology"/>
<reference key="1">
    <citation type="journal article" date="2005" name="Proc. Natl. Acad. Sci. U.S.A.">
        <title>Comparison of the complete genome sequences of Pseudomonas syringae pv. syringae B728a and pv. tomato DC3000.</title>
        <authorList>
            <person name="Feil H."/>
            <person name="Feil W.S."/>
            <person name="Chain P."/>
            <person name="Larimer F."/>
            <person name="Dibartolo G."/>
            <person name="Copeland A."/>
            <person name="Lykidis A."/>
            <person name="Trong S."/>
            <person name="Nolan M."/>
            <person name="Goltsman E."/>
            <person name="Thiel J."/>
            <person name="Malfatti S."/>
            <person name="Loper J.E."/>
            <person name="Lapidus A."/>
            <person name="Detter J.C."/>
            <person name="Land M."/>
            <person name="Richardson P.M."/>
            <person name="Kyrpides N.C."/>
            <person name="Ivanova N."/>
            <person name="Lindow S.E."/>
        </authorList>
    </citation>
    <scope>NUCLEOTIDE SEQUENCE [LARGE SCALE GENOMIC DNA]</scope>
    <source>
        <strain>B728a</strain>
    </source>
</reference>
<keyword id="KW-0066">ATP synthesis</keyword>
<keyword id="KW-0997">Cell inner membrane</keyword>
<keyword id="KW-1003">Cell membrane</keyword>
<keyword id="KW-0139">CF(1)</keyword>
<keyword id="KW-0375">Hydrogen ion transport</keyword>
<keyword id="KW-0406">Ion transport</keyword>
<keyword id="KW-0472">Membrane</keyword>
<keyword id="KW-0813">Transport</keyword>
<evidence type="ECO:0000255" key="1">
    <source>
        <dbReference type="HAMAP-Rule" id="MF_00815"/>
    </source>
</evidence>
<protein>
    <recommendedName>
        <fullName evidence="1">ATP synthase gamma chain</fullName>
    </recommendedName>
    <alternativeName>
        <fullName evidence="1">ATP synthase F1 sector gamma subunit</fullName>
    </alternativeName>
    <alternativeName>
        <fullName evidence="1">F-ATPase gamma subunit</fullName>
    </alternativeName>
</protein>
<gene>
    <name evidence="1" type="primary">atpG</name>
    <name type="ordered locus">Psyr_5122</name>
</gene>
<feature type="chain" id="PRO_0000073349" description="ATP synthase gamma chain">
    <location>
        <begin position="1"/>
        <end position="286"/>
    </location>
</feature>
<dbReference type="EMBL" id="CP000075">
    <property type="protein sequence ID" value="AAY40149.1"/>
    <property type="molecule type" value="Genomic_DNA"/>
</dbReference>
<dbReference type="RefSeq" id="WP_003367855.1">
    <property type="nucleotide sequence ID" value="NC_007005.1"/>
</dbReference>
<dbReference type="RefSeq" id="YP_238187.1">
    <property type="nucleotide sequence ID" value="NC_007005.1"/>
</dbReference>
<dbReference type="SMR" id="Q4ZL23"/>
<dbReference type="STRING" id="205918.Psyr_5122"/>
<dbReference type="GeneID" id="96221650"/>
<dbReference type="KEGG" id="psb:Psyr_5122"/>
<dbReference type="PATRIC" id="fig|205918.7.peg.5283"/>
<dbReference type="eggNOG" id="COG0224">
    <property type="taxonomic scope" value="Bacteria"/>
</dbReference>
<dbReference type="HOGENOM" id="CLU_050669_0_1_6"/>
<dbReference type="OrthoDB" id="9812769at2"/>
<dbReference type="Proteomes" id="UP000000426">
    <property type="component" value="Chromosome"/>
</dbReference>
<dbReference type="GO" id="GO:0005886">
    <property type="term" value="C:plasma membrane"/>
    <property type="evidence" value="ECO:0007669"/>
    <property type="project" value="UniProtKB-SubCell"/>
</dbReference>
<dbReference type="GO" id="GO:0045259">
    <property type="term" value="C:proton-transporting ATP synthase complex"/>
    <property type="evidence" value="ECO:0007669"/>
    <property type="project" value="UniProtKB-KW"/>
</dbReference>
<dbReference type="GO" id="GO:0005524">
    <property type="term" value="F:ATP binding"/>
    <property type="evidence" value="ECO:0007669"/>
    <property type="project" value="UniProtKB-UniRule"/>
</dbReference>
<dbReference type="GO" id="GO:0046933">
    <property type="term" value="F:proton-transporting ATP synthase activity, rotational mechanism"/>
    <property type="evidence" value="ECO:0007669"/>
    <property type="project" value="UniProtKB-UniRule"/>
</dbReference>
<dbReference type="GO" id="GO:0042777">
    <property type="term" value="P:proton motive force-driven plasma membrane ATP synthesis"/>
    <property type="evidence" value="ECO:0007669"/>
    <property type="project" value="UniProtKB-UniRule"/>
</dbReference>
<dbReference type="CDD" id="cd12151">
    <property type="entry name" value="F1-ATPase_gamma"/>
    <property type="match status" value="1"/>
</dbReference>
<dbReference type="FunFam" id="1.10.287.80:FF:000005">
    <property type="entry name" value="ATP synthase gamma chain"/>
    <property type="match status" value="1"/>
</dbReference>
<dbReference type="FunFam" id="3.40.1380.10:FF:000001">
    <property type="entry name" value="ATP synthase gamma chain"/>
    <property type="match status" value="1"/>
</dbReference>
<dbReference type="Gene3D" id="3.40.1380.10">
    <property type="match status" value="1"/>
</dbReference>
<dbReference type="Gene3D" id="1.10.287.80">
    <property type="entry name" value="ATP synthase, gamma subunit, helix hairpin domain"/>
    <property type="match status" value="1"/>
</dbReference>
<dbReference type="HAMAP" id="MF_00815">
    <property type="entry name" value="ATP_synth_gamma_bact"/>
    <property type="match status" value="1"/>
</dbReference>
<dbReference type="InterPro" id="IPR035968">
    <property type="entry name" value="ATP_synth_F1_ATPase_gsu"/>
</dbReference>
<dbReference type="InterPro" id="IPR000131">
    <property type="entry name" value="ATP_synth_F1_gsu"/>
</dbReference>
<dbReference type="InterPro" id="IPR023632">
    <property type="entry name" value="ATP_synth_F1_gsu_CS"/>
</dbReference>
<dbReference type="NCBIfam" id="TIGR01146">
    <property type="entry name" value="ATPsyn_F1gamma"/>
    <property type="match status" value="1"/>
</dbReference>
<dbReference type="NCBIfam" id="NF004144">
    <property type="entry name" value="PRK05621.1-1"/>
    <property type="match status" value="1"/>
</dbReference>
<dbReference type="PANTHER" id="PTHR11693">
    <property type="entry name" value="ATP SYNTHASE GAMMA CHAIN"/>
    <property type="match status" value="1"/>
</dbReference>
<dbReference type="PANTHER" id="PTHR11693:SF22">
    <property type="entry name" value="ATP SYNTHASE SUBUNIT GAMMA, MITOCHONDRIAL"/>
    <property type="match status" value="1"/>
</dbReference>
<dbReference type="Pfam" id="PF00231">
    <property type="entry name" value="ATP-synt"/>
    <property type="match status" value="1"/>
</dbReference>
<dbReference type="PRINTS" id="PR00126">
    <property type="entry name" value="ATPASEGAMMA"/>
</dbReference>
<dbReference type="SUPFAM" id="SSF52943">
    <property type="entry name" value="ATP synthase (F1-ATPase), gamma subunit"/>
    <property type="match status" value="1"/>
</dbReference>
<dbReference type="PROSITE" id="PS00153">
    <property type="entry name" value="ATPASE_GAMMA"/>
    <property type="match status" value="1"/>
</dbReference>
<accession>Q4ZL23</accession>
<sequence length="286" mass="31364">MAGAKEIRSKIASIKSTQKITSAMEKVAVSKMRKAQMRMAASRPYAERIRQVIGHLANANPEYRHPFMIERPVKRVGYVVVSSDRGLCGGLNTNLFKTLVKDMAVNRENGVEIDLCVVGSKGAAFFRNFGGNVVAAISHLGEEPSINDLIGSVKVMLDAYLDGRIDRLSVVSNKFINTMTQQPTVEQLIPLVATPDQGLKHHWDYLYEPDAKELLDGLMVRYVESQVYQAVVENNAAEQAARMIAMKNATDNAGDLISDLQLIYNKARQAAITQEISEIVGGAAAV</sequence>